<sequence length="556" mass="61857">MQFDYIIIGAGSAGNVLATRLTEDPNTTVLLLEAGGPDYRFDFRTQMPAALAFPLQGKRYNWAYETEPEPFMNNRRMECGRGKGLGGSSLINGMCYIRGNALDLDNWAQEPGLENWSYLDCLPYYRKAETRDVGENDYHGGDGPVSVTTSKPGVNPLFEAMIEAGVQAGYPRTDDLNGYQQEGFGPMDRTVTPHGRRASTARGYLDQAKSRPNLTIRTHAMTDHIIFDGKRAVGVEWLEGDSTIPTRATANKEVLLCAGAIASPQILQRSGVGSAELLAEFDIPLVHDLPGVGENLQDHLEMYLQYECKEPVSLYPALQWWNQPKIGAEWLFGGTGVGASNHFEAGGFIRSREEFAWPNIQYHFLPVAINYNGSNAVKEHGFQCHVGSMRSPSRGHVRIKSRDPHQHPAILFNYMSHEQDWQEFRDAIRITREIMHQPALDQYRGREISPGVECQTDEQLDEFVRNHAETAFHPCGTCKMGYDEMAVVDGEGRVHGLEGLRVVDASIMPQIITGNLNATTIMIGEKMADMIRGKDALPRSTAGYYVANGRPVRAKK</sequence>
<keyword id="KW-0274">FAD</keyword>
<keyword id="KW-0285">Flavoprotein</keyword>
<keyword id="KW-0520">NAD</keyword>
<keyword id="KW-0560">Oxidoreductase</keyword>
<gene>
    <name evidence="1" type="primary">betA</name>
    <name type="ordered locus">ECUMN_0349</name>
</gene>
<comment type="function">
    <text evidence="1">Involved in the biosynthesis of the osmoprotectant glycine betaine. Catalyzes the oxidation of choline to betaine aldehyde and betaine aldehyde to glycine betaine at the same rate.</text>
</comment>
<comment type="catalytic activity">
    <reaction evidence="1">
        <text>choline + A = betaine aldehyde + AH2</text>
        <dbReference type="Rhea" id="RHEA:17433"/>
        <dbReference type="ChEBI" id="CHEBI:13193"/>
        <dbReference type="ChEBI" id="CHEBI:15354"/>
        <dbReference type="ChEBI" id="CHEBI:15710"/>
        <dbReference type="ChEBI" id="CHEBI:17499"/>
        <dbReference type="EC" id="1.1.99.1"/>
    </reaction>
</comment>
<comment type="catalytic activity">
    <reaction evidence="1">
        <text>betaine aldehyde + NAD(+) + H2O = glycine betaine + NADH + 2 H(+)</text>
        <dbReference type="Rhea" id="RHEA:15305"/>
        <dbReference type="ChEBI" id="CHEBI:15377"/>
        <dbReference type="ChEBI" id="CHEBI:15378"/>
        <dbReference type="ChEBI" id="CHEBI:15710"/>
        <dbReference type="ChEBI" id="CHEBI:17750"/>
        <dbReference type="ChEBI" id="CHEBI:57540"/>
        <dbReference type="ChEBI" id="CHEBI:57945"/>
        <dbReference type="EC" id="1.2.1.8"/>
    </reaction>
</comment>
<comment type="cofactor">
    <cofactor evidence="1">
        <name>FAD</name>
        <dbReference type="ChEBI" id="CHEBI:57692"/>
    </cofactor>
</comment>
<comment type="pathway">
    <text evidence="1">Amine and polyamine biosynthesis; betaine biosynthesis via choline pathway; betaine aldehyde from choline (cytochrome c reductase route): step 1/1.</text>
</comment>
<comment type="similarity">
    <text evidence="1">Belongs to the GMC oxidoreductase family.</text>
</comment>
<organism>
    <name type="scientific">Escherichia coli O17:K52:H18 (strain UMN026 / ExPEC)</name>
    <dbReference type="NCBI Taxonomy" id="585056"/>
    <lineage>
        <taxon>Bacteria</taxon>
        <taxon>Pseudomonadati</taxon>
        <taxon>Pseudomonadota</taxon>
        <taxon>Gammaproteobacteria</taxon>
        <taxon>Enterobacterales</taxon>
        <taxon>Enterobacteriaceae</taxon>
        <taxon>Escherichia</taxon>
    </lineage>
</organism>
<name>BETA_ECOLU</name>
<protein>
    <recommendedName>
        <fullName evidence="1">Oxygen-dependent choline dehydrogenase</fullName>
        <shortName evidence="1">CDH</shortName>
        <shortName evidence="1">CHD</shortName>
        <ecNumber evidence="1">1.1.99.1</ecNumber>
    </recommendedName>
    <alternativeName>
        <fullName evidence="1">Betaine aldehyde dehydrogenase</fullName>
        <shortName evidence="1">BADH</shortName>
        <ecNumber evidence="1">1.2.1.8</ecNumber>
    </alternativeName>
</protein>
<accession>B7N8L3</accession>
<proteinExistence type="inferred from homology"/>
<reference key="1">
    <citation type="journal article" date="2009" name="PLoS Genet.">
        <title>Organised genome dynamics in the Escherichia coli species results in highly diverse adaptive paths.</title>
        <authorList>
            <person name="Touchon M."/>
            <person name="Hoede C."/>
            <person name="Tenaillon O."/>
            <person name="Barbe V."/>
            <person name="Baeriswyl S."/>
            <person name="Bidet P."/>
            <person name="Bingen E."/>
            <person name="Bonacorsi S."/>
            <person name="Bouchier C."/>
            <person name="Bouvet O."/>
            <person name="Calteau A."/>
            <person name="Chiapello H."/>
            <person name="Clermont O."/>
            <person name="Cruveiller S."/>
            <person name="Danchin A."/>
            <person name="Diard M."/>
            <person name="Dossat C."/>
            <person name="Karoui M.E."/>
            <person name="Frapy E."/>
            <person name="Garry L."/>
            <person name="Ghigo J.M."/>
            <person name="Gilles A.M."/>
            <person name="Johnson J."/>
            <person name="Le Bouguenec C."/>
            <person name="Lescat M."/>
            <person name="Mangenot S."/>
            <person name="Martinez-Jehanne V."/>
            <person name="Matic I."/>
            <person name="Nassif X."/>
            <person name="Oztas S."/>
            <person name="Petit M.A."/>
            <person name="Pichon C."/>
            <person name="Rouy Z."/>
            <person name="Ruf C.S."/>
            <person name="Schneider D."/>
            <person name="Tourret J."/>
            <person name="Vacherie B."/>
            <person name="Vallenet D."/>
            <person name="Medigue C."/>
            <person name="Rocha E.P.C."/>
            <person name="Denamur E."/>
        </authorList>
    </citation>
    <scope>NUCLEOTIDE SEQUENCE [LARGE SCALE GENOMIC DNA]</scope>
    <source>
        <strain>UMN026 / ExPEC</strain>
    </source>
</reference>
<dbReference type="EC" id="1.1.99.1" evidence="1"/>
<dbReference type="EC" id="1.2.1.8" evidence="1"/>
<dbReference type="EMBL" id="CU928163">
    <property type="protein sequence ID" value="CAR11564.1"/>
    <property type="molecule type" value="Genomic_DNA"/>
</dbReference>
<dbReference type="RefSeq" id="WP_001159140.1">
    <property type="nucleotide sequence ID" value="NC_011751.1"/>
</dbReference>
<dbReference type="RefSeq" id="YP_002411114.1">
    <property type="nucleotide sequence ID" value="NC_011751.1"/>
</dbReference>
<dbReference type="SMR" id="B7N8L3"/>
<dbReference type="STRING" id="585056.ECUMN_0349"/>
<dbReference type="KEGG" id="eum:ECUMN_0349"/>
<dbReference type="PATRIC" id="fig|585056.7.peg.548"/>
<dbReference type="HOGENOM" id="CLU_002865_7_1_6"/>
<dbReference type="UniPathway" id="UPA00529">
    <property type="reaction ID" value="UER00385"/>
</dbReference>
<dbReference type="Proteomes" id="UP000007097">
    <property type="component" value="Chromosome"/>
</dbReference>
<dbReference type="GO" id="GO:0016020">
    <property type="term" value="C:membrane"/>
    <property type="evidence" value="ECO:0007669"/>
    <property type="project" value="TreeGrafter"/>
</dbReference>
<dbReference type="GO" id="GO:0008802">
    <property type="term" value="F:betaine-aldehyde dehydrogenase (NAD+) activity"/>
    <property type="evidence" value="ECO:0007669"/>
    <property type="project" value="UniProtKB-EC"/>
</dbReference>
<dbReference type="GO" id="GO:0008812">
    <property type="term" value="F:choline dehydrogenase activity"/>
    <property type="evidence" value="ECO:0007669"/>
    <property type="project" value="UniProtKB-UniRule"/>
</dbReference>
<dbReference type="GO" id="GO:0050660">
    <property type="term" value="F:flavin adenine dinucleotide binding"/>
    <property type="evidence" value="ECO:0007669"/>
    <property type="project" value="InterPro"/>
</dbReference>
<dbReference type="GO" id="GO:0019285">
    <property type="term" value="P:glycine betaine biosynthetic process from choline"/>
    <property type="evidence" value="ECO:0007669"/>
    <property type="project" value="UniProtKB-UniRule"/>
</dbReference>
<dbReference type="Gene3D" id="3.50.50.60">
    <property type="entry name" value="FAD/NAD(P)-binding domain"/>
    <property type="match status" value="1"/>
</dbReference>
<dbReference type="Gene3D" id="3.30.560.10">
    <property type="entry name" value="Glucose Oxidase, domain 3"/>
    <property type="match status" value="1"/>
</dbReference>
<dbReference type="HAMAP" id="MF_00750">
    <property type="entry name" value="Choline_dehydrogen"/>
    <property type="match status" value="1"/>
</dbReference>
<dbReference type="InterPro" id="IPR011533">
    <property type="entry name" value="BetA"/>
</dbReference>
<dbReference type="InterPro" id="IPR036188">
    <property type="entry name" value="FAD/NAD-bd_sf"/>
</dbReference>
<dbReference type="InterPro" id="IPR012132">
    <property type="entry name" value="GMC_OxRdtase"/>
</dbReference>
<dbReference type="InterPro" id="IPR000172">
    <property type="entry name" value="GMC_OxRdtase_N"/>
</dbReference>
<dbReference type="InterPro" id="IPR007867">
    <property type="entry name" value="GMC_OxRtase_C"/>
</dbReference>
<dbReference type="NCBIfam" id="TIGR01810">
    <property type="entry name" value="betA"/>
    <property type="match status" value="1"/>
</dbReference>
<dbReference type="NCBIfam" id="NF002550">
    <property type="entry name" value="PRK02106.1"/>
    <property type="match status" value="1"/>
</dbReference>
<dbReference type="PANTHER" id="PTHR11552:SF147">
    <property type="entry name" value="CHOLINE DEHYDROGENASE, MITOCHONDRIAL"/>
    <property type="match status" value="1"/>
</dbReference>
<dbReference type="PANTHER" id="PTHR11552">
    <property type="entry name" value="GLUCOSE-METHANOL-CHOLINE GMC OXIDOREDUCTASE"/>
    <property type="match status" value="1"/>
</dbReference>
<dbReference type="Pfam" id="PF05199">
    <property type="entry name" value="GMC_oxred_C"/>
    <property type="match status" value="1"/>
</dbReference>
<dbReference type="Pfam" id="PF00732">
    <property type="entry name" value="GMC_oxred_N"/>
    <property type="match status" value="1"/>
</dbReference>
<dbReference type="PIRSF" id="PIRSF000137">
    <property type="entry name" value="Alcohol_oxidase"/>
    <property type="match status" value="1"/>
</dbReference>
<dbReference type="SUPFAM" id="SSF54373">
    <property type="entry name" value="FAD-linked reductases, C-terminal domain"/>
    <property type="match status" value="1"/>
</dbReference>
<dbReference type="SUPFAM" id="SSF51905">
    <property type="entry name" value="FAD/NAD(P)-binding domain"/>
    <property type="match status" value="1"/>
</dbReference>
<dbReference type="PROSITE" id="PS00623">
    <property type="entry name" value="GMC_OXRED_1"/>
    <property type="match status" value="1"/>
</dbReference>
<dbReference type="PROSITE" id="PS00624">
    <property type="entry name" value="GMC_OXRED_2"/>
    <property type="match status" value="1"/>
</dbReference>
<feature type="chain" id="PRO_1000133330" description="Oxygen-dependent choline dehydrogenase">
    <location>
        <begin position="1"/>
        <end position="556"/>
    </location>
</feature>
<feature type="active site" description="Proton acceptor" evidence="1">
    <location>
        <position position="473"/>
    </location>
</feature>
<feature type="binding site" evidence="1">
    <location>
        <begin position="4"/>
        <end position="33"/>
    </location>
    <ligand>
        <name>FAD</name>
        <dbReference type="ChEBI" id="CHEBI:57692"/>
    </ligand>
</feature>
<evidence type="ECO:0000255" key="1">
    <source>
        <dbReference type="HAMAP-Rule" id="MF_00750"/>
    </source>
</evidence>